<feature type="chain" id="PRO_0000266851" description="Probable GTP-binding protein EngB">
    <location>
        <begin position="1"/>
        <end position="193"/>
    </location>
</feature>
<feature type="domain" description="EngB-type G" evidence="1">
    <location>
        <begin position="22"/>
        <end position="193"/>
    </location>
</feature>
<feature type="binding site" evidence="1">
    <location>
        <begin position="30"/>
        <end position="37"/>
    </location>
    <ligand>
        <name>GTP</name>
        <dbReference type="ChEBI" id="CHEBI:37565"/>
    </ligand>
</feature>
<feature type="binding site" evidence="1">
    <location>
        <position position="37"/>
    </location>
    <ligand>
        <name>Mg(2+)</name>
        <dbReference type="ChEBI" id="CHEBI:18420"/>
    </ligand>
</feature>
<feature type="binding site" evidence="1">
    <location>
        <begin position="57"/>
        <end position="61"/>
    </location>
    <ligand>
        <name>GTP</name>
        <dbReference type="ChEBI" id="CHEBI:37565"/>
    </ligand>
</feature>
<feature type="binding site" evidence="1">
    <location>
        <position position="59"/>
    </location>
    <ligand>
        <name>Mg(2+)</name>
        <dbReference type="ChEBI" id="CHEBI:18420"/>
    </ligand>
</feature>
<feature type="binding site" evidence="1">
    <location>
        <begin position="75"/>
        <end position="78"/>
    </location>
    <ligand>
        <name>GTP</name>
        <dbReference type="ChEBI" id="CHEBI:37565"/>
    </ligand>
</feature>
<feature type="binding site" evidence="1">
    <location>
        <begin position="142"/>
        <end position="145"/>
    </location>
    <ligand>
        <name>GTP</name>
        <dbReference type="ChEBI" id="CHEBI:37565"/>
    </ligand>
</feature>
<feature type="binding site" evidence="1">
    <location>
        <begin position="173"/>
        <end position="175"/>
    </location>
    <ligand>
        <name>GTP</name>
        <dbReference type="ChEBI" id="CHEBI:37565"/>
    </ligand>
</feature>
<comment type="function">
    <text evidence="1">Necessary for normal cell division and for the maintenance of normal septation.</text>
</comment>
<comment type="cofactor">
    <cofactor evidence="1">
        <name>Mg(2+)</name>
        <dbReference type="ChEBI" id="CHEBI:18420"/>
    </cofactor>
</comment>
<comment type="similarity">
    <text evidence="1">Belongs to the TRAFAC class TrmE-Era-EngA-EngB-Septin-like GTPase superfamily. EngB GTPase family.</text>
</comment>
<proteinExistence type="inferred from homology"/>
<organism>
    <name type="scientific">Desulfotalea psychrophila (strain LSv54 / DSM 12343)</name>
    <dbReference type="NCBI Taxonomy" id="177439"/>
    <lineage>
        <taxon>Bacteria</taxon>
        <taxon>Pseudomonadati</taxon>
        <taxon>Thermodesulfobacteriota</taxon>
        <taxon>Desulfobulbia</taxon>
        <taxon>Desulfobulbales</taxon>
        <taxon>Desulfocapsaceae</taxon>
        <taxon>Desulfotalea</taxon>
    </lineage>
</organism>
<accession>Q6AJW0</accession>
<protein>
    <recommendedName>
        <fullName evidence="1">Probable GTP-binding protein EngB</fullName>
    </recommendedName>
</protein>
<dbReference type="EMBL" id="CR522870">
    <property type="protein sequence ID" value="CAG37366.1"/>
    <property type="molecule type" value="Genomic_DNA"/>
</dbReference>
<dbReference type="RefSeq" id="WP_011189878.1">
    <property type="nucleotide sequence ID" value="NC_006138.1"/>
</dbReference>
<dbReference type="SMR" id="Q6AJW0"/>
<dbReference type="STRING" id="177439.DP2637"/>
<dbReference type="KEGG" id="dps:DP2637"/>
<dbReference type="eggNOG" id="COG0218">
    <property type="taxonomic scope" value="Bacteria"/>
</dbReference>
<dbReference type="HOGENOM" id="CLU_033732_3_0_7"/>
<dbReference type="OrthoDB" id="9804921at2"/>
<dbReference type="Proteomes" id="UP000000602">
    <property type="component" value="Chromosome"/>
</dbReference>
<dbReference type="GO" id="GO:0005829">
    <property type="term" value="C:cytosol"/>
    <property type="evidence" value="ECO:0007669"/>
    <property type="project" value="TreeGrafter"/>
</dbReference>
<dbReference type="GO" id="GO:0005525">
    <property type="term" value="F:GTP binding"/>
    <property type="evidence" value="ECO:0007669"/>
    <property type="project" value="UniProtKB-UniRule"/>
</dbReference>
<dbReference type="GO" id="GO:0046872">
    <property type="term" value="F:metal ion binding"/>
    <property type="evidence" value="ECO:0007669"/>
    <property type="project" value="UniProtKB-KW"/>
</dbReference>
<dbReference type="GO" id="GO:0000917">
    <property type="term" value="P:division septum assembly"/>
    <property type="evidence" value="ECO:0007669"/>
    <property type="project" value="UniProtKB-KW"/>
</dbReference>
<dbReference type="CDD" id="cd01876">
    <property type="entry name" value="YihA_EngB"/>
    <property type="match status" value="1"/>
</dbReference>
<dbReference type="FunFam" id="3.40.50.300:FF:000098">
    <property type="entry name" value="Probable GTP-binding protein EngB"/>
    <property type="match status" value="1"/>
</dbReference>
<dbReference type="Gene3D" id="3.40.50.300">
    <property type="entry name" value="P-loop containing nucleotide triphosphate hydrolases"/>
    <property type="match status" value="1"/>
</dbReference>
<dbReference type="HAMAP" id="MF_00321">
    <property type="entry name" value="GTPase_EngB"/>
    <property type="match status" value="1"/>
</dbReference>
<dbReference type="InterPro" id="IPR030393">
    <property type="entry name" value="G_ENGB_dom"/>
</dbReference>
<dbReference type="InterPro" id="IPR006073">
    <property type="entry name" value="GTP-bd"/>
</dbReference>
<dbReference type="InterPro" id="IPR019987">
    <property type="entry name" value="GTP-bd_ribosome_bio_YsxC"/>
</dbReference>
<dbReference type="InterPro" id="IPR027417">
    <property type="entry name" value="P-loop_NTPase"/>
</dbReference>
<dbReference type="NCBIfam" id="TIGR03598">
    <property type="entry name" value="GTPase_YsxC"/>
    <property type="match status" value="1"/>
</dbReference>
<dbReference type="PANTHER" id="PTHR11649:SF13">
    <property type="entry name" value="ENGB-TYPE G DOMAIN-CONTAINING PROTEIN"/>
    <property type="match status" value="1"/>
</dbReference>
<dbReference type="PANTHER" id="PTHR11649">
    <property type="entry name" value="MSS1/TRME-RELATED GTP-BINDING PROTEIN"/>
    <property type="match status" value="1"/>
</dbReference>
<dbReference type="Pfam" id="PF01926">
    <property type="entry name" value="MMR_HSR1"/>
    <property type="match status" value="1"/>
</dbReference>
<dbReference type="SUPFAM" id="SSF52540">
    <property type="entry name" value="P-loop containing nucleoside triphosphate hydrolases"/>
    <property type="match status" value="1"/>
</dbReference>
<dbReference type="PROSITE" id="PS51706">
    <property type="entry name" value="G_ENGB"/>
    <property type="match status" value="1"/>
</dbReference>
<evidence type="ECO:0000255" key="1">
    <source>
        <dbReference type="HAMAP-Rule" id="MF_00321"/>
    </source>
</evidence>
<reference key="1">
    <citation type="journal article" date="2004" name="Environ. Microbiol.">
        <title>The genome of Desulfotalea psychrophila, a sulfate-reducing bacterium from permanently cold Arctic sediments.</title>
        <authorList>
            <person name="Rabus R."/>
            <person name="Ruepp A."/>
            <person name="Frickey T."/>
            <person name="Rattei T."/>
            <person name="Fartmann B."/>
            <person name="Stark M."/>
            <person name="Bauer M."/>
            <person name="Zibat A."/>
            <person name="Lombardot T."/>
            <person name="Becker I."/>
            <person name="Amann J."/>
            <person name="Gellner K."/>
            <person name="Teeling H."/>
            <person name="Leuschner W.D."/>
            <person name="Gloeckner F.-O."/>
            <person name="Lupas A.N."/>
            <person name="Amann R."/>
            <person name="Klenk H.-P."/>
        </authorList>
    </citation>
    <scope>NUCLEOTIDE SEQUENCE [LARGE SCALE GENOMIC DNA]</scope>
    <source>
        <strain>DSM 12343 / LSv54</strain>
    </source>
</reference>
<keyword id="KW-0131">Cell cycle</keyword>
<keyword id="KW-0132">Cell division</keyword>
<keyword id="KW-0342">GTP-binding</keyword>
<keyword id="KW-0460">Magnesium</keyword>
<keyword id="KW-0479">Metal-binding</keyword>
<keyword id="KW-0547">Nucleotide-binding</keyword>
<keyword id="KW-1185">Reference proteome</keyword>
<keyword id="KW-0717">Septation</keyword>
<name>ENGB_DESPS</name>
<gene>
    <name evidence="1" type="primary">engB</name>
    <name type="ordered locus">DP2637</name>
</gene>
<sequence length="193" mass="21612">MNLNDITFLLSVHGLDQLPEDGLPEFAFAGRSNVGKSSLMNTLLRRSGFVKVSGRPGKTQGLNFFQAAEDCMLVDLPGYGFARVSKEMQNNWQKLITSYISEREALKCVVVIIDIRHEPKALDRQLLDWLREQKVPVLPIYTKIDKLSGNQLSRHAAILDAGHGIKKDERILFSSKTGQGRDELIAVLESYLA</sequence>